<evidence type="ECO:0000250" key="1"/>
<evidence type="ECO:0000305" key="2"/>
<keyword id="KW-0408">Iron</keyword>
<keyword id="KW-0479">Metal-binding</keyword>
<keyword id="KW-0560">Oxidoreductase</keyword>
<sequence length="213" mass="24532">MFTLRELPFAKDSMGDFLSPVAFDFHHGKHHQTYVNNLNNLIKGTDFEKSSLFAILTKSSGGVFNNAAQIYNHDFYWDCLSPKATALSDELKEALEKDFGSLEKFKEDFIKSATTLFGSGWNWAAYNLDTQKIEIIQTSNAQTPVTDKKVPLLVVDVWEHAYYIDHKNARPVYLEKFYGHVNWHFVSQCYEWAKKEGLGSVDYYINELVHKKA</sequence>
<feature type="chain" id="PRO_0000159986" description="Superoxide dismutase [Fe]">
    <location>
        <begin position="1"/>
        <end position="213"/>
    </location>
</feature>
<feature type="binding site" evidence="1">
    <location>
        <position position="26"/>
    </location>
    <ligand>
        <name>Fe cation</name>
        <dbReference type="ChEBI" id="CHEBI:24875"/>
    </ligand>
</feature>
<feature type="binding site" evidence="1">
    <location>
        <position position="73"/>
    </location>
    <ligand>
        <name>Fe cation</name>
        <dbReference type="ChEBI" id="CHEBI:24875"/>
    </ligand>
</feature>
<feature type="binding site" evidence="1">
    <location>
        <position position="156"/>
    </location>
    <ligand>
        <name>Fe cation</name>
        <dbReference type="ChEBI" id="CHEBI:24875"/>
    </ligand>
</feature>
<feature type="binding site" evidence="1">
    <location>
        <position position="160"/>
    </location>
    <ligand>
        <name>Fe cation</name>
        <dbReference type="ChEBI" id="CHEBI:24875"/>
    </ligand>
</feature>
<proteinExistence type="inferred from homology"/>
<comment type="function">
    <text>Destroys superoxide anion radicals which are normally produced within the cells and which are toxic to biological systems.</text>
</comment>
<comment type="catalytic activity">
    <reaction>
        <text>2 superoxide + 2 H(+) = H2O2 + O2</text>
        <dbReference type="Rhea" id="RHEA:20696"/>
        <dbReference type="ChEBI" id="CHEBI:15378"/>
        <dbReference type="ChEBI" id="CHEBI:15379"/>
        <dbReference type="ChEBI" id="CHEBI:16240"/>
        <dbReference type="ChEBI" id="CHEBI:18421"/>
        <dbReference type="EC" id="1.15.1.1"/>
    </reaction>
</comment>
<comment type="cofactor">
    <cofactor evidence="1">
        <name>Fe cation</name>
        <dbReference type="ChEBI" id="CHEBI:24875"/>
    </cofactor>
    <text evidence="1">Binds 1 Fe cation per subunit.</text>
</comment>
<comment type="subunit">
    <text evidence="1">Homodimer.</text>
</comment>
<comment type="similarity">
    <text evidence="2">Belongs to the iron/manganese superoxide dismutase family.</text>
</comment>
<accession>Q9ZKE6</accession>
<dbReference type="EC" id="1.15.1.1"/>
<dbReference type="EMBL" id="AE001439">
    <property type="protein sequence ID" value="AAD06571.1"/>
    <property type="molecule type" value="Genomic_DNA"/>
</dbReference>
<dbReference type="PIR" id="E71861">
    <property type="entry name" value="E71861"/>
</dbReference>
<dbReference type="RefSeq" id="WP_000494616.1">
    <property type="nucleotide sequence ID" value="NC_000921.1"/>
</dbReference>
<dbReference type="SMR" id="Q9ZKE6"/>
<dbReference type="KEGG" id="hpj:jhp_0992"/>
<dbReference type="PATRIC" id="fig|85963.30.peg.1599"/>
<dbReference type="eggNOG" id="COG0605">
    <property type="taxonomic scope" value="Bacteria"/>
</dbReference>
<dbReference type="Proteomes" id="UP000000804">
    <property type="component" value="Chromosome"/>
</dbReference>
<dbReference type="GO" id="GO:0046872">
    <property type="term" value="F:metal ion binding"/>
    <property type="evidence" value="ECO:0007669"/>
    <property type="project" value="UniProtKB-KW"/>
</dbReference>
<dbReference type="GO" id="GO:0004784">
    <property type="term" value="F:superoxide dismutase activity"/>
    <property type="evidence" value="ECO:0007669"/>
    <property type="project" value="UniProtKB-EC"/>
</dbReference>
<dbReference type="FunFam" id="1.10.287.990:FF:000002">
    <property type="entry name" value="Superoxide dismutase"/>
    <property type="match status" value="1"/>
</dbReference>
<dbReference type="FunFam" id="3.55.40.20:FF:000008">
    <property type="entry name" value="Superoxide dismutase"/>
    <property type="match status" value="1"/>
</dbReference>
<dbReference type="Gene3D" id="1.10.287.990">
    <property type="entry name" value="Fe,Mn superoxide dismutase (SOD) domain"/>
    <property type="match status" value="1"/>
</dbReference>
<dbReference type="Gene3D" id="3.55.40.20">
    <property type="entry name" value="Iron/manganese superoxide dismutase, C-terminal domain"/>
    <property type="match status" value="1"/>
</dbReference>
<dbReference type="InterPro" id="IPR001189">
    <property type="entry name" value="Mn/Fe_SOD"/>
</dbReference>
<dbReference type="InterPro" id="IPR019833">
    <property type="entry name" value="Mn/Fe_SOD_BS"/>
</dbReference>
<dbReference type="InterPro" id="IPR019832">
    <property type="entry name" value="Mn/Fe_SOD_C"/>
</dbReference>
<dbReference type="InterPro" id="IPR019831">
    <property type="entry name" value="Mn/Fe_SOD_N"/>
</dbReference>
<dbReference type="InterPro" id="IPR036324">
    <property type="entry name" value="Mn/Fe_SOD_N_sf"/>
</dbReference>
<dbReference type="InterPro" id="IPR036314">
    <property type="entry name" value="SOD_C_sf"/>
</dbReference>
<dbReference type="PANTHER" id="PTHR42769">
    <property type="entry name" value="SUPEROXIDE DISMUTASE"/>
    <property type="match status" value="1"/>
</dbReference>
<dbReference type="PANTHER" id="PTHR42769:SF3">
    <property type="entry name" value="SUPEROXIDE DISMUTASE [FE] 2, CHLOROPLASTIC"/>
    <property type="match status" value="1"/>
</dbReference>
<dbReference type="Pfam" id="PF02777">
    <property type="entry name" value="Sod_Fe_C"/>
    <property type="match status" value="1"/>
</dbReference>
<dbReference type="Pfam" id="PF00081">
    <property type="entry name" value="Sod_Fe_N"/>
    <property type="match status" value="1"/>
</dbReference>
<dbReference type="PIRSF" id="PIRSF000349">
    <property type="entry name" value="SODismutase"/>
    <property type="match status" value="1"/>
</dbReference>
<dbReference type="PRINTS" id="PR01703">
    <property type="entry name" value="MNSODISMTASE"/>
</dbReference>
<dbReference type="SUPFAM" id="SSF54719">
    <property type="entry name" value="Fe,Mn superoxide dismutase (SOD), C-terminal domain"/>
    <property type="match status" value="1"/>
</dbReference>
<dbReference type="SUPFAM" id="SSF46609">
    <property type="entry name" value="Fe,Mn superoxide dismutase (SOD), N-terminal domain"/>
    <property type="match status" value="1"/>
</dbReference>
<dbReference type="PROSITE" id="PS00088">
    <property type="entry name" value="SOD_MN"/>
    <property type="match status" value="1"/>
</dbReference>
<name>SODF_HELPJ</name>
<protein>
    <recommendedName>
        <fullName>Superoxide dismutase [Fe]</fullName>
        <ecNumber>1.15.1.1</ecNumber>
    </recommendedName>
</protein>
<gene>
    <name type="primary">sodB</name>
    <name type="synonym">sodF</name>
    <name type="ordered locus">jhp_0992</name>
</gene>
<organism>
    <name type="scientific">Helicobacter pylori (strain J99 / ATCC 700824)</name>
    <name type="common">Campylobacter pylori J99</name>
    <dbReference type="NCBI Taxonomy" id="85963"/>
    <lineage>
        <taxon>Bacteria</taxon>
        <taxon>Pseudomonadati</taxon>
        <taxon>Campylobacterota</taxon>
        <taxon>Epsilonproteobacteria</taxon>
        <taxon>Campylobacterales</taxon>
        <taxon>Helicobacteraceae</taxon>
        <taxon>Helicobacter</taxon>
    </lineage>
</organism>
<reference key="1">
    <citation type="journal article" date="1999" name="Nature">
        <title>Genomic sequence comparison of two unrelated isolates of the human gastric pathogen Helicobacter pylori.</title>
        <authorList>
            <person name="Alm R.A."/>
            <person name="Ling L.-S.L."/>
            <person name="Moir D.T."/>
            <person name="King B.L."/>
            <person name="Brown E.D."/>
            <person name="Doig P.C."/>
            <person name="Smith D.R."/>
            <person name="Noonan B."/>
            <person name="Guild B.C."/>
            <person name="deJonge B.L."/>
            <person name="Carmel G."/>
            <person name="Tummino P.J."/>
            <person name="Caruso A."/>
            <person name="Uria-Nickelsen M."/>
            <person name="Mills D.M."/>
            <person name="Ives C."/>
            <person name="Gibson R."/>
            <person name="Merberg D."/>
            <person name="Mills S.D."/>
            <person name="Jiang Q."/>
            <person name="Taylor D.E."/>
            <person name="Vovis G.F."/>
            <person name="Trust T.J."/>
        </authorList>
    </citation>
    <scope>NUCLEOTIDE SEQUENCE [LARGE SCALE GENOMIC DNA]</scope>
    <source>
        <strain>J99 / ATCC 700824</strain>
    </source>
</reference>